<proteinExistence type="inferred from homology"/>
<dbReference type="EC" id="2.3.1.-"/>
<dbReference type="EMBL" id="AF355593">
    <property type="protein sequence ID" value="AAL35100.1"/>
    <property type="molecule type" value="Genomic_DNA"/>
</dbReference>
<dbReference type="EMBL" id="CP003832">
    <property type="protein sequence ID" value="AFR98667.1"/>
    <property type="molecule type" value="Genomic_DNA"/>
</dbReference>
<dbReference type="RefSeq" id="XP_012053554.1">
    <property type="nucleotide sequence ID" value="XM_012198164.1"/>
</dbReference>
<dbReference type="GlyCosmos" id="Q8X226">
    <property type="glycosylation" value="2 sites, No reported glycans"/>
</dbReference>
<dbReference type="GeneID" id="23890742"/>
<dbReference type="KEGG" id="cng:CNAG_07937"/>
<dbReference type="VEuPathDB" id="FungiDB:CNAG_07937"/>
<dbReference type="HOGENOM" id="CLU_008003_0_1_1"/>
<dbReference type="OrthoDB" id="3940at5206"/>
<dbReference type="Proteomes" id="UP000010091">
    <property type="component" value="Chromosome 13"/>
</dbReference>
<dbReference type="GO" id="GO:0005794">
    <property type="term" value="C:Golgi apparatus"/>
    <property type="evidence" value="ECO:0007669"/>
    <property type="project" value="UniProtKB-ARBA"/>
</dbReference>
<dbReference type="GO" id="GO:0016020">
    <property type="term" value="C:membrane"/>
    <property type="evidence" value="ECO:0007669"/>
    <property type="project" value="UniProtKB-SubCell"/>
</dbReference>
<dbReference type="GO" id="GO:0016491">
    <property type="term" value="F:oxidoreductase activity"/>
    <property type="evidence" value="ECO:0007669"/>
    <property type="project" value="UniProtKB-KW"/>
</dbReference>
<dbReference type="GO" id="GO:0016740">
    <property type="term" value="F:transferase activity"/>
    <property type="evidence" value="ECO:0007669"/>
    <property type="project" value="UniProtKB-KW"/>
</dbReference>
<dbReference type="GO" id="GO:0005975">
    <property type="term" value="P:carbohydrate metabolic process"/>
    <property type="evidence" value="ECO:0007669"/>
    <property type="project" value="UniProtKB-ARBA"/>
</dbReference>
<dbReference type="InterPro" id="IPR012419">
    <property type="entry name" value="Cas1_AcylTrans_dom"/>
</dbReference>
<dbReference type="PANTHER" id="PTHR13533">
    <property type="entry name" value="N-ACETYLNEURAMINATE 9-O-ACETYLTRANSFERASE"/>
    <property type="match status" value="1"/>
</dbReference>
<dbReference type="PANTHER" id="PTHR13533:SF1">
    <property type="entry name" value="N-ACETYLNEURAMINATE 9-O-ACETYLTRANSFERASE"/>
    <property type="match status" value="1"/>
</dbReference>
<dbReference type="Pfam" id="PF07779">
    <property type="entry name" value="Cas1_AcylT"/>
    <property type="match status" value="1"/>
</dbReference>
<keyword id="KW-0325">Glycoprotein</keyword>
<keyword id="KW-0472">Membrane</keyword>
<keyword id="KW-0560">Oxidoreductase</keyword>
<keyword id="KW-0808">Transferase</keyword>
<keyword id="KW-0812">Transmembrane</keyword>
<keyword id="KW-1133">Transmembrane helix</keyword>
<evidence type="ECO:0000250" key="1">
    <source>
        <dbReference type="UniProtKB" id="P0CM56"/>
    </source>
</evidence>
<evidence type="ECO:0000250" key="2">
    <source>
        <dbReference type="UniProtKB" id="Q96PB1"/>
    </source>
</evidence>
<evidence type="ECO:0000255" key="3"/>
<evidence type="ECO:0000305" key="4"/>
<gene>
    <name type="primary">CAS1</name>
    <name type="ORF">CNAG_07937</name>
</gene>
<name>CAS1_CRYNH</name>
<reference key="1">
    <citation type="journal article" date="2001" name="Mol. Microbiol.">
        <title>Cas1p is a membrane protein necessary for the O-acetylation of the Cryptococcus neoformans capsular polysaccharide.</title>
        <authorList>
            <person name="Janbon G."/>
            <person name="Himmelreich U."/>
            <person name="Moyrand F."/>
            <person name="Improvisi L."/>
            <person name="Dromer F."/>
        </authorList>
    </citation>
    <scope>NUCLEOTIDE SEQUENCE [GENOMIC DNA]</scope>
    <source>
        <strain>H99 / ATCC 208821 / CBS 10515 / FGSC 9487</strain>
    </source>
</reference>
<reference key="2">
    <citation type="journal article" date="2014" name="PLoS Genet.">
        <title>Analysis of the genome and transcriptome of Cryptococcus neoformans var. grubii reveals complex RNA expression and microevolution leading to virulence attenuation.</title>
        <authorList>
            <person name="Janbon G."/>
            <person name="Ormerod K.L."/>
            <person name="Paulet D."/>
            <person name="Byrnes E.J. III"/>
            <person name="Yadav V."/>
            <person name="Chatterjee G."/>
            <person name="Mullapudi N."/>
            <person name="Hon C.-C."/>
            <person name="Billmyre R.B."/>
            <person name="Brunel F."/>
            <person name="Bahn Y.-S."/>
            <person name="Chen W."/>
            <person name="Chen Y."/>
            <person name="Chow E.W.L."/>
            <person name="Coppee J.-Y."/>
            <person name="Floyd-Averette A."/>
            <person name="Gaillardin C."/>
            <person name="Gerik K.J."/>
            <person name="Goldberg J."/>
            <person name="Gonzalez-Hilarion S."/>
            <person name="Gujja S."/>
            <person name="Hamlin J.L."/>
            <person name="Hsueh Y.-P."/>
            <person name="Ianiri G."/>
            <person name="Jones S."/>
            <person name="Kodira C.D."/>
            <person name="Kozubowski L."/>
            <person name="Lam W."/>
            <person name="Marra M."/>
            <person name="Mesner L.D."/>
            <person name="Mieczkowski P.A."/>
            <person name="Moyrand F."/>
            <person name="Nielsen K."/>
            <person name="Proux C."/>
            <person name="Rossignol T."/>
            <person name="Schein J.E."/>
            <person name="Sun S."/>
            <person name="Wollschlaeger C."/>
            <person name="Wood I.A."/>
            <person name="Zeng Q."/>
            <person name="Neuveglise C."/>
            <person name="Newlon C.S."/>
            <person name="Perfect J.R."/>
            <person name="Lodge J.K."/>
            <person name="Idnurm A."/>
            <person name="Stajich J.E."/>
            <person name="Kronstad J.W."/>
            <person name="Sanyal K."/>
            <person name="Heitman J."/>
            <person name="Fraser J.A."/>
            <person name="Cuomo C.A."/>
            <person name="Dietrich F.S."/>
        </authorList>
    </citation>
    <scope>NUCLEOTIDE SEQUENCE [LARGE SCALE GENOMIC DNA]</scope>
    <source>
        <strain>H99 / ATCC 208821 / CBS 10515 / FGSC 9487</strain>
    </source>
</reference>
<protein>
    <recommendedName>
        <fullName>Probable O-acetyltransferase CAS1</fullName>
        <ecNumber>2.3.1.-</ecNumber>
    </recommendedName>
    <alternativeName>
        <fullName>Capsule synthesis protein 1</fullName>
    </alternativeName>
</protein>
<sequence>MPNSSNSRSQATAAKLNPLWYTYACATLVAAVVLGNILRWAFLELPDSYHCSALLNTGKWLDPGTWTNWQPEGCFQLPLSAQSWQRCLASPTVNTHQALHSYYDKRTALFVGDSTVRQLYFATARKVGKASKAWESEGEKHTDRSLLVSDPLGGPSLELEFWWDPYLNSSKTIGLLSGRGLAPSSLLVMGSGLWYLRNPSSGGLASWGAMIHDTFEFIKKNQGSPQAALINPWDNMLLGSGLTLPGLLPQQSPKFVDSSREVEARSLFSRASSASHRPADFSISDAIVYLPISTPVHEKLSSSRAETIFHTDVEAMNADLYARLTHPDPPPVVIPSVFNQLLVDDETEDGLHFSDKIMDKQAELLLSWRCNDVMRHEGATGACCKRYDWVTPIQGLILAVLILWAPLGTFITPRLPPNSPIHDYLPSPSIAPALSTFGLAVGYLFLADRTHVFQKEQKDYDAVVFGVITFAAFVAGLLTIKNSGKDLGFLNRDITDEWKGWMQIAILIYHFFGASKISGIYNPIRVLVASYLFMTGYGHFFFYYKKADFGFQRVVMVLVRLNLLSVVLPYTMNTDYAFYYFAPLVSWWYLIIYATMAFGSKYNDRPAFLLAKLFTCAGLVTLFMHFPWLMEDVFKVLNTVFNIQWSAKEWSFRVTLDLFIVWAGMLCAYGFVKFKEYQISDRPWFPTMHTATLIGSVLGMIWYFWFELHLANKFVYNEYHAVVCIVPIISFIFLRNASPVLRSSTSKIFCFIGQCSLETFILQFHGWLASDTKAVLLAVPSTQWRPVNLVISTICFIWLSYRVSGATGEITEWLVGKKKALPLPATSAGPSTSTSRQATSPTLTTASAMQAVVEGPQDGAKGGIPESIPMMNQADKDIGGLTPMEDETLERRDSWPTWMASTAASLTGRTAEGYAPLTRQWKDQTVLSVIQNLGDLMKKHTSVKIAVILFGLWVLNWIY</sequence>
<comment type="function">
    <text evidence="1">Probable O-acetyltransferase required for the O-acetylation of the capsular glucoronoxylmannans (GXM) involved in virulence.</text>
</comment>
<comment type="subcellular location">
    <subcellularLocation>
        <location evidence="4">Membrane</location>
        <topology evidence="4">Multi-pass membrane protein</topology>
    </subcellularLocation>
</comment>
<comment type="similarity">
    <text evidence="4">Belongs to the PC-esterase family. CASD1 subfamily.</text>
</comment>
<accession>Q8X226</accession>
<accession>J9VW11</accession>
<organism>
    <name type="scientific">Cryptococcus neoformans var. grubii serotype A (strain H99 / ATCC 208821 / CBS 10515 / FGSC 9487)</name>
    <name type="common">Filobasidiella neoformans var. grubii</name>
    <dbReference type="NCBI Taxonomy" id="235443"/>
    <lineage>
        <taxon>Eukaryota</taxon>
        <taxon>Fungi</taxon>
        <taxon>Dikarya</taxon>
        <taxon>Basidiomycota</taxon>
        <taxon>Agaricomycotina</taxon>
        <taxon>Tremellomycetes</taxon>
        <taxon>Tremellales</taxon>
        <taxon>Cryptococcaceae</taxon>
        <taxon>Cryptococcus</taxon>
        <taxon>Cryptococcus neoformans species complex</taxon>
    </lineage>
</organism>
<feature type="chain" id="PRO_0000307853" description="Probable O-acetyltransferase CAS1">
    <location>
        <begin position="1"/>
        <end position="959"/>
    </location>
</feature>
<feature type="transmembrane region" description="Helical" evidence="3">
    <location>
        <begin position="18"/>
        <end position="38"/>
    </location>
</feature>
<feature type="transmembrane region" description="Helical" evidence="3">
    <location>
        <begin position="391"/>
        <end position="411"/>
    </location>
</feature>
<feature type="transmembrane region" description="Helical" evidence="3">
    <location>
        <begin position="427"/>
        <end position="447"/>
    </location>
</feature>
<feature type="transmembrane region" description="Helical" evidence="3">
    <location>
        <begin position="460"/>
        <end position="480"/>
    </location>
</feature>
<feature type="transmembrane region" description="Helical" evidence="3">
    <location>
        <begin position="500"/>
        <end position="520"/>
    </location>
</feature>
<feature type="transmembrane region" description="Helical" evidence="3">
    <location>
        <begin position="524"/>
        <end position="544"/>
    </location>
</feature>
<feature type="transmembrane region" description="Helical" evidence="3">
    <location>
        <begin position="554"/>
        <end position="574"/>
    </location>
</feature>
<feature type="transmembrane region" description="Helical" evidence="3">
    <location>
        <begin position="578"/>
        <end position="598"/>
    </location>
</feature>
<feature type="transmembrane region" description="Helical" evidence="3">
    <location>
        <begin position="608"/>
        <end position="628"/>
    </location>
</feature>
<feature type="transmembrane region" description="Helical" evidence="3">
    <location>
        <begin position="654"/>
        <end position="674"/>
    </location>
</feature>
<feature type="transmembrane region" description="Helical" evidence="3">
    <location>
        <begin position="691"/>
        <end position="711"/>
    </location>
</feature>
<feature type="transmembrane region" description="Helical" evidence="3">
    <location>
        <begin position="714"/>
        <end position="734"/>
    </location>
</feature>
<feature type="transmembrane region" description="Helical" evidence="3">
    <location>
        <begin position="939"/>
        <end position="959"/>
    </location>
</feature>
<feature type="active site" description="Acyl-ester intermediate" evidence="2">
    <location>
        <position position="114"/>
    </location>
</feature>
<feature type="active site" evidence="2">
    <location>
        <position position="349"/>
    </location>
</feature>
<feature type="active site" evidence="2">
    <location>
        <position position="352"/>
    </location>
</feature>
<feature type="glycosylation site" description="N-linked (GlcNAc...) asparagine" evidence="3">
    <location>
        <position position="3"/>
    </location>
</feature>
<feature type="glycosylation site" description="N-linked (GlcNAc...) asparagine" evidence="3">
    <location>
        <position position="168"/>
    </location>
</feature>